<proteinExistence type="inferred from homology"/>
<comment type="similarity">
    <text evidence="1">Belongs to the bacterial ribosomal protein bL33 family.</text>
</comment>
<name>RL33_ECO27</name>
<gene>
    <name evidence="1" type="primary">rpmG</name>
    <name type="ordered locus">E2348C_3884</name>
</gene>
<sequence length="55" mass="6372">MAKGIREKIKLVSSAGTGHFYTTTKNKRTKPEKLELKKFDPVVRQHVIYKEAKIK</sequence>
<dbReference type="EMBL" id="FM180568">
    <property type="protein sequence ID" value="CAS11432.1"/>
    <property type="molecule type" value="Genomic_DNA"/>
</dbReference>
<dbReference type="RefSeq" id="WP_001051798.1">
    <property type="nucleotide sequence ID" value="NC_011601.1"/>
</dbReference>
<dbReference type="SMR" id="B7ULJ1"/>
<dbReference type="GeneID" id="97607673"/>
<dbReference type="KEGG" id="ecg:E2348C_3884"/>
<dbReference type="HOGENOM" id="CLU_190949_1_1_6"/>
<dbReference type="Proteomes" id="UP000008205">
    <property type="component" value="Chromosome"/>
</dbReference>
<dbReference type="GO" id="GO:0022625">
    <property type="term" value="C:cytosolic large ribosomal subunit"/>
    <property type="evidence" value="ECO:0007669"/>
    <property type="project" value="TreeGrafter"/>
</dbReference>
<dbReference type="GO" id="GO:0003735">
    <property type="term" value="F:structural constituent of ribosome"/>
    <property type="evidence" value="ECO:0007669"/>
    <property type="project" value="InterPro"/>
</dbReference>
<dbReference type="GO" id="GO:0006412">
    <property type="term" value="P:translation"/>
    <property type="evidence" value="ECO:0007669"/>
    <property type="project" value="UniProtKB-UniRule"/>
</dbReference>
<dbReference type="FunFam" id="2.20.28.120:FF:000001">
    <property type="entry name" value="50S ribosomal protein L33"/>
    <property type="match status" value="1"/>
</dbReference>
<dbReference type="Gene3D" id="2.20.28.120">
    <property type="entry name" value="Ribosomal protein L33"/>
    <property type="match status" value="1"/>
</dbReference>
<dbReference type="HAMAP" id="MF_00294">
    <property type="entry name" value="Ribosomal_bL33"/>
    <property type="match status" value="1"/>
</dbReference>
<dbReference type="InterPro" id="IPR001705">
    <property type="entry name" value="Ribosomal_bL33"/>
</dbReference>
<dbReference type="InterPro" id="IPR018264">
    <property type="entry name" value="Ribosomal_bL33_CS"/>
</dbReference>
<dbReference type="InterPro" id="IPR038584">
    <property type="entry name" value="Ribosomal_bL33_sf"/>
</dbReference>
<dbReference type="InterPro" id="IPR011332">
    <property type="entry name" value="Ribosomal_zn-bd"/>
</dbReference>
<dbReference type="NCBIfam" id="NF001860">
    <property type="entry name" value="PRK00595.1"/>
    <property type="match status" value="1"/>
</dbReference>
<dbReference type="NCBIfam" id="TIGR01023">
    <property type="entry name" value="rpmG_bact"/>
    <property type="match status" value="1"/>
</dbReference>
<dbReference type="PANTHER" id="PTHR15238">
    <property type="entry name" value="54S RIBOSOMAL PROTEIN L39, MITOCHONDRIAL"/>
    <property type="match status" value="1"/>
</dbReference>
<dbReference type="PANTHER" id="PTHR15238:SF1">
    <property type="entry name" value="LARGE RIBOSOMAL SUBUNIT PROTEIN BL33M"/>
    <property type="match status" value="1"/>
</dbReference>
<dbReference type="Pfam" id="PF00471">
    <property type="entry name" value="Ribosomal_L33"/>
    <property type="match status" value="1"/>
</dbReference>
<dbReference type="SUPFAM" id="SSF57829">
    <property type="entry name" value="Zn-binding ribosomal proteins"/>
    <property type="match status" value="1"/>
</dbReference>
<dbReference type="PROSITE" id="PS00582">
    <property type="entry name" value="RIBOSOMAL_L33"/>
    <property type="match status" value="1"/>
</dbReference>
<keyword id="KW-1185">Reference proteome</keyword>
<keyword id="KW-0687">Ribonucleoprotein</keyword>
<keyword id="KW-0689">Ribosomal protein</keyword>
<evidence type="ECO:0000255" key="1">
    <source>
        <dbReference type="HAMAP-Rule" id="MF_00294"/>
    </source>
</evidence>
<evidence type="ECO:0000305" key="2"/>
<accession>B7ULJ1</accession>
<reference key="1">
    <citation type="journal article" date="2009" name="J. Bacteriol.">
        <title>Complete genome sequence and comparative genome analysis of enteropathogenic Escherichia coli O127:H6 strain E2348/69.</title>
        <authorList>
            <person name="Iguchi A."/>
            <person name="Thomson N.R."/>
            <person name="Ogura Y."/>
            <person name="Saunders D."/>
            <person name="Ooka T."/>
            <person name="Henderson I.R."/>
            <person name="Harris D."/>
            <person name="Asadulghani M."/>
            <person name="Kurokawa K."/>
            <person name="Dean P."/>
            <person name="Kenny B."/>
            <person name="Quail M.A."/>
            <person name="Thurston S."/>
            <person name="Dougan G."/>
            <person name="Hayashi T."/>
            <person name="Parkhill J."/>
            <person name="Frankel G."/>
        </authorList>
    </citation>
    <scope>NUCLEOTIDE SEQUENCE [LARGE SCALE GENOMIC DNA]</scope>
    <source>
        <strain>E2348/69 / EPEC</strain>
    </source>
</reference>
<feature type="chain" id="PRO_1000194055" description="Large ribosomal subunit protein bL33">
    <location>
        <begin position="1"/>
        <end position="55"/>
    </location>
</feature>
<organism>
    <name type="scientific">Escherichia coli O127:H6 (strain E2348/69 / EPEC)</name>
    <dbReference type="NCBI Taxonomy" id="574521"/>
    <lineage>
        <taxon>Bacteria</taxon>
        <taxon>Pseudomonadati</taxon>
        <taxon>Pseudomonadota</taxon>
        <taxon>Gammaproteobacteria</taxon>
        <taxon>Enterobacterales</taxon>
        <taxon>Enterobacteriaceae</taxon>
        <taxon>Escherichia</taxon>
    </lineage>
</organism>
<protein>
    <recommendedName>
        <fullName evidence="1">Large ribosomal subunit protein bL33</fullName>
    </recommendedName>
    <alternativeName>
        <fullName evidence="2">50S ribosomal protein L33</fullName>
    </alternativeName>
</protein>